<accession>A9BJC5</accession>
<proteinExistence type="inferred from homology"/>
<sequence length="89" mass="10457">MKKLVLKSIDFYRKHISPATPPKCIYLPTCSSYTYEAVEKFGVFKGLYLGFRRFIRCNPLHKGGYDPVPEKFSFFVHKQGKNKQHRRSV</sequence>
<protein>
    <recommendedName>
        <fullName evidence="1">Putative membrane protein insertion efficiency factor</fullName>
    </recommendedName>
</protein>
<dbReference type="EMBL" id="CP000879">
    <property type="protein sequence ID" value="ABX31339.1"/>
    <property type="molecule type" value="Genomic_DNA"/>
</dbReference>
<dbReference type="STRING" id="403833.Pmob_0605"/>
<dbReference type="KEGG" id="pmo:Pmob_0605"/>
<dbReference type="eggNOG" id="COG0759">
    <property type="taxonomic scope" value="Bacteria"/>
</dbReference>
<dbReference type="HOGENOM" id="CLU_144811_6_0_0"/>
<dbReference type="OrthoDB" id="9801753at2"/>
<dbReference type="Proteomes" id="UP000000789">
    <property type="component" value="Chromosome"/>
</dbReference>
<dbReference type="GO" id="GO:0005886">
    <property type="term" value="C:plasma membrane"/>
    <property type="evidence" value="ECO:0007669"/>
    <property type="project" value="UniProtKB-SubCell"/>
</dbReference>
<dbReference type="HAMAP" id="MF_00386">
    <property type="entry name" value="UPF0161_YidD"/>
    <property type="match status" value="1"/>
</dbReference>
<dbReference type="InterPro" id="IPR002696">
    <property type="entry name" value="Membr_insert_effic_factor_YidD"/>
</dbReference>
<dbReference type="NCBIfam" id="TIGR00278">
    <property type="entry name" value="membrane protein insertion efficiency factor YidD"/>
    <property type="match status" value="1"/>
</dbReference>
<dbReference type="PANTHER" id="PTHR33383">
    <property type="entry name" value="MEMBRANE PROTEIN INSERTION EFFICIENCY FACTOR-RELATED"/>
    <property type="match status" value="1"/>
</dbReference>
<dbReference type="PANTHER" id="PTHR33383:SF1">
    <property type="entry name" value="MEMBRANE PROTEIN INSERTION EFFICIENCY FACTOR-RELATED"/>
    <property type="match status" value="1"/>
</dbReference>
<dbReference type="Pfam" id="PF01809">
    <property type="entry name" value="YidD"/>
    <property type="match status" value="1"/>
</dbReference>
<dbReference type="SMART" id="SM01234">
    <property type="entry name" value="Haemolytic"/>
    <property type="match status" value="1"/>
</dbReference>
<comment type="function">
    <text evidence="1">Could be involved in insertion of integral membrane proteins into the membrane.</text>
</comment>
<comment type="subcellular location">
    <subcellularLocation>
        <location evidence="1">Cell inner membrane</location>
        <topology evidence="1">Peripheral membrane protein</topology>
        <orientation evidence="1">Cytoplasmic side</orientation>
    </subcellularLocation>
</comment>
<comment type="similarity">
    <text evidence="1">Belongs to the UPF0161 family.</text>
</comment>
<keyword id="KW-0997">Cell inner membrane</keyword>
<keyword id="KW-1003">Cell membrane</keyword>
<keyword id="KW-0472">Membrane</keyword>
<name>YIDD_PETMO</name>
<organism>
    <name type="scientific">Petrotoga mobilis (strain DSM 10674 / SJ95)</name>
    <dbReference type="NCBI Taxonomy" id="403833"/>
    <lineage>
        <taxon>Bacteria</taxon>
        <taxon>Thermotogati</taxon>
        <taxon>Thermotogota</taxon>
        <taxon>Thermotogae</taxon>
        <taxon>Petrotogales</taxon>
        <taxon>Petrotogaceae</taxon>
        <taxon>Petrotoga</taxon>
    </lineage>
</organism>
<evidence type="ECO:0000255" key="1">
    <source>
        <dbReference type="HAMAP-Rule" id="MF_00386"/>
    </source>
</evidence>
<gene>
    <name type="ordered locus">Pmob_0605</name>
</gene>
<feature type="chain" id="PRO_1000080193" description="Putative membrane protein insertion efficiency factor">
    <location>
        <begin position="1"/>
        <end position="89"/>
    </location>
</feature>
<reference key="1">
    <citation type="submission" date="2007-11" db="EMBL/GenBank/DDBJ databases">
        <title>Complete sequence of Petroga mobilis SJ95.</title>
        <authorList>
            <consortium name="US DOE Joint Genome Institute"/>
            <person name="Copeland A."/>
            <person name="Lucas S."/>
            <person name="Lapidus A."/>
            <person name="Barry K."/>
            <person name="Glavina del Rio T."/>
            <person name="Dalin E."/>
            <person name="Tice H."/>
            <person name="Pitluck S."/>
            <person name="Meincke L."/>
            <person name="Brettin T."/>
            <person name="Bruce D."/>
            <person name="Detter J.C."/>
            <person name="Han C."/>
            <person name="Kuske C.R."/>
            <person name="Schmutz J."/>
            <person name="Larimer F."/>
            <person name="Land M."/>
            <person name="Hauser L."/>
            <person name="Kyrpides N."/>
            <person name="Mikhailova N."/>
            <person name="Noll K."/>
            <person name="Richardson P."/>
        </authorList>
    </citation>
    <scope>NUCLEOTIDE SEQUENCE [LARGE SCALE GENOMIC DNA]</scope>
    <source>
        <strain>DSM 10674 / SJ95</strain>
    </source>
</reference>